<evidence type="ECO:0000255" key="1">
    <source>
        <dbReference type="HAMAP-Rule" id="MF_00074"/>
    </source>
</evidence>
<accession>A5E8G9</accession>
<reference key="1">
    <citation type="journal article" date="2007" name="Science">
        <title>Legumes symbioses: absence of nod genes in photosynthetic bradyrhizobia.</title>
        <authorList>
            <person name="Giraud E."/>
            <person name="Moulin L."/>
            <person name="Vallenet D."/>
            <person name="Barbe V."/>
            <person name="Cytryn E."/>
            <person name="Avarre J.-C."/>
            <person name="Jaubert M."/>
            <person name="Simon D."/>
            <person name="Cartieaux F."/>
            <person name="Prin Y."/>
            <person name="Bena G."/>
            <person name="Hannibal L."/>
            <person name="Fardoux J."/>
            <person name="Kojadinovic M."/>
            <person name="Vuillet L."/>
            <person name="Lajus A."/>
            <person name="Cruveiller S."/>
            <person name="Rouy Z."/>
            <person name="Mangenot S."/>
            <person name="Segurens B."/>
            <person name="Dossat C."/>
            <person name="Franck W.L."/>
            <person name="Chang W.-S."/>
            <person name="Saunders E."/>
            <person name="Bruce D."/>
            <person name="Richardson P."/>
            <person name="Normand P."/>
            <person name="Dreyfus B."/>
            <person name="Pignol D."/>
            <person name="Stacey G."/>
            <person name="Emerich D."/>
            <person name="Vermeglio A."/>
            <person name="Medigue C."/>
            <person name="Sadowsky M."/>
        </authorList>
    </citation>
    <scope>NUCLEOTIDE SEQUENCE [LARGE SCALE GENOMIC DNA]</scope>
    <source>
        <strain>BTAi1 / ATCC BAA-1182</strain>
    </source>
</reference>
<dbReference type="EC" id="2.1.1.170" evidence="1"/>
<dbReference type="EMBL" id="CP000494">
    <property type="protein sequence ID" value="ABQ32463.1"/>
    <property type="molecule type" value="Genomic_DNA"/>
</dbReference>
<dbReference type="RefSeq" id="WP_011942684.1">
    <property type="nucleotide sequence ID" value="NC_009485.1"/>
</dbReference>
<dbReference type="SMR" id="A5E8G9"/>
<dbReference type="STRING" id="288000.BBta_0166"/>
<dbReference type="KEGG" id="bbt:BBta_0166"/>
<dbReference type="eggNOG" id="COG0357">
    <property type="taxonomic scope" value="Bacteria"/>
</dbReference>
<dbReference type="HOGENOM" id="CLU_065341_1_0_5"/>
<dbReference type="OrthoDB" id="9808773at2"/>
<dbReference type="Proteomes" id="UP000000246">
    <property type="component" value="Chromosome"/>
</dbReference>
<dbReference type="GO" id="GO:0005829">
    <property type="term" value="C:cytosol"/>
    <property type="evidence" value="ECO:0007669"/>
    <property type="project" value="TreeGrafter"/>
</dbReference>
<dbReference type="GO" id="GO:0070043">
    <property type="term" value="F:rRNA (guanine-N7-)-methyltransferase activity"/>
    <property type="evidence" value="ECO:0007669"/>
    <property type="project" value="UniProtKB-UniRule"/>
</dbReference>
<dbReference type="Gene3D" id="3.40.50.150">
    <property type="entry name" value="Vaccinia Virus protein VP39"/>
    <property type="match status" value="1"/>
</dbReference>
<dbReference type="HAMAP" id="MF_00074">
    <property type="entry name" value="16SrRNA_methyltr_G"/>
    <property type="match status" value="1"/>
</dbReference>
<dbReference type="InterPro" id="IPR003682">
    <property type="entry name" value="rRNA_ssu_MeTfrase_G"/>
</dbReference>
<dbReference type="InterPro" id="IPR029063">
    <property type="entry name" value="SAM-dependent_MTases_sf"/>
</dbReference>
<dbReference type="NCBIfam" id="TIGR00138">
    <property type="entry name" value="rsmG_gidB"/>
    <property type="match status" value="1"/>
</dbReference>
<dbReference type="PANTHER" id="PTHR31760">
    <property type="entry name" value="S-ADENOSYL-L-METHIONINE-DEPENDENT METHYLTRANSFERASES SUPERFAMILY PROTEIN"/>
    <property type="match status" value="1"/>
</dbReference>
<dbReference type="PANTHER" id="PTHR31760:SF0">
    <property type="entry name" value="S-ADENOSYL-L-METHIONINE-DEPENDENT METHYLTRANSFERASES SUPERFAMILY PROTEIN"/>
    <property type="match status" value="1"/>
</dbReference>
<dbReference type="Pfam" id="PF02527">
    <property type="entry name" value="GidB"/>
    <property type="match status" value="1"/>
</dbReference>
<dbReference type="PIRSF" id="PIRSF003078">
    <property type="entry name" value="GidB"/>
    <property type="match status" value="1"/>
</dbReference>
<dbReference type="SUPFAM" id="SSF53335">
    <property type="entry name" value="S-adenosyl-L-methionine-dependent methyltransferases"/>
    <property type="match status" value="1"/>
</dbReference>
<proteinExistence type="inferred from homology"/>
<gene>
    <name evidence="1" type="primary">rsmG</name>
    <name type="ordered locus">BBta_0166</name>
</gene>
<feature type="chain" id="PRO_0000335313" description="Ribosomal RNA small subunit methyltransferase G">
    <location>
        <begin position="1"/>
        <end position="222"/>
    </location>
</feature>
<feature type="binding site" evidence="1">
    <location>
        <position position="84"/>
    </location>
    <ligand>
        <name>S-adenosyl-L-methionine</name>
        <dbReference type="ChEBI" id="CHEBI:59789"/>
    </ligand>
</feature>
<feature type="binding site" evidence="1">
    <location>
        <position position="89"/>
    </location>
    <ligand>
        <name>S-adenosyl-L-methionine</name>
        <dbReference type="ChEBI" id="CHEBI:59789"/>
    </ligand>
</feature>
<feature type="binding site" evidence="1">
    <location>
        <begin position="141"/>
        <end position="142"/>
    </location>
    <ligand>
        <name>S-adenosyl-L-methionine</name>
        <dbReference type="ChEBI" id="CHEBI:59789"/>
    </ligand>
</feature>
<feature type="binding site" evidence="1">
    <location>
        <position position="154"/>
    </location>
    <ligand>
        <name>S-adenosyl-L-methionine</name>
        <dbReference type="ChEBI" id="CHEBI:59789"/>
    </ligand>
</feature>
<protein>
    <recommendedName>
        <fullName evidence="1">Ribosomal RNA small subunit methyltransferase G</fullName>
        <ecNumber evidence="1">2.1.1.170</ecNumber>
    </recommendedName>
    <alternativeName>
        <fullName evidence="1">16S rRNA 7-methylguanosine methyltransferase</fullName>
        <shortName evidence="1">16S rRNA m7G methyltransferase</shortName>
    </alternativeName>
</protein>
<sequence length="222" mass="23999">MKQTSAVVASKVIAADKAAALALTPVSRETEQRLDRYVALLLEWQAKTNLVAPSTLPHLWTRHISDSLQLLDLAPDAKIWVDLGSGGGFPGVVLACALAERPGAEVHLVERIAKKAAFLREAIRVTGAPGIVHLSEIGDIVEKWSGGVDCVTARALAPLHQLIGFAEPLVKRGAKALFLKGQDVEAELTESTKYWKIEPKLYSSRTGGQGWIVAIDCIERHN</sequence>
<comment type="function">
    <text evidence="1">Specifically methylates the N7 position of guanine in position 527 of 16S rRNA.</text>
</comment>
<comment type="catalytic activity">
    <reaction evidence="1">
        <text>guanosine(527) in 16S rRNA + S-adenosyl-L-methionine = N(7)-methylguanosine(527) in 16S rRNA + S-adenosyl-L-homocysteine</text>
        <dbReference type="Rhea" id="RHEA:42732"/>
        <dbReference type="Rhea" id="RHEA-COMP:10209"/>
        <dbReference type="Rhea" id="RHEA-COMP:10210"/>
        <dbReference type="ChEBI" id="CHEBI:57856"/>
        <dbReference type="ChEBI" id="CHEBI:59789"/>
        <dbReference type="ChEBI" id="CHEBI:74269"/>
        <dbReference type="ChEBI" id="CHEBI:74480"/>
        <dbReference type="EC" id="2.1.1.170"/>
    </reaction>
</comment>
<comment type="subcellular location">
    <subcellularLocation>
        <location evidence="1">Cytoplasm</location>
    </subcellularLocation>
</comment>
<comment type="similarity">
    <text evidence="1">Belongs to the methyltransferase superfamily. RNA methyltransferase RsmG family.</text>
</comment>
<name>RSMG_BRASB</name>
<keyword id="KW-0963">Cytoplasm</keyword>
<keyword id="KW-0489">Methyltransferase</keyword>
<keyword id="KW-1185">Reference proteome</keyword>
<keyword id="KW-0698">rRNA processing</keyword>
<keyword id="KW-0949">S-adenosyl-L-methionine</keyword>
<keyword id="KW-0808">Transferase</keyword>
<organism>
    <name type="scientific">Bradyrhizobium sp. (strain BTAi1 / ATCC BAA-1182)</name>
    <dbReference type="NCBI Taxonomy" id="288000"/>
    <lineage>
        <taxon>Bacteria</taxon>
        <taxon>Pseudomonadati</taxon>
        <taxon>Pseudomonadota</taxon>
        <taxon>Alphaproteobacteria</taxon>
        <taxon>Hyphomicrobiales</taxon>
        <taxon>Nitrobacteraceae</taxon>
        <taxon>Bradyrhizobium</taxon>
    </lineage>
</organism>